<protein>
    <recommendedName>
        <fullName evidence="1">Bifunctional protein FolD</fullName>
    </recommendedName>
    <domain>
        <recommendedName>
            <fullName evidence="1">Methylenetetrahydrofolate dehydrogenase</fullName>
            <ecNumber evidence="1">1.5.1.5</ecNumber>
        </recommendedName>
    </domain>
    <domain>
        <recommendedName>
            <fullName evidence="1">Methenyltetrahydrofolate cyclohydrolase</fullName>
            <ecNumber evidence="1">3.5.4.9</ecNumber>
        </recommendedName>
    </domain>
</protein>
<dbReference type="EC" id="1.5.1.5" evidence="1"/>
<dbReference type="EC" id="3.5.4.9" evidence="1"/>
<dbReference type="EMBL" id="CP000227">
    <property type="protein sequence ID" value="ACM14395.1"/>
    <property type="molecule type" value="Genomic_DNA"/>
</dbReference>
<dbReference type="SMR" id="B9IXH4"/>
<dbReference type="KEGG" id="bcq:BCQ_3967"/>
<dbReference type="HOGENOM" id="CLU_034045_2_1_9"/>
<dbReference type="UniPathway" id="UPA00193"/>
<dbReference type="Proteomes" id="UP000000441">
    <property type="component" value="Chromosome"/>
</dbReference>
<dbReference type="GO" id="GO:0005829">
    <property type="term" value="C:cytosol"/>
    <property type="evidence" value="ECO:0007669"/>
    <property type="project" value="TreeGrafter"/>
</dbReference>
<dbReference type="GO" id="GO:0004477">
    <property type="term" value="F:methenyltetrahydrofolate cyclohydrolase activity"/>
    <property type="evidence" value="ECO:0007669"/>
    <property type="project" value="UniProtKB-UniRule"/>
</dbReference>
<dbReference type="GO" id="GO:0004488">
    <property type="term" value="F:methylenetetrahydrofolate dehydrogenase (NADP+) activity"/>
    <property type="evidence" value="ECO:0007669"/>
    <property type="project" value="UniProtKB-UniRule"/>
</dbReference>
<dbReference type="GO" id="GO:0000105">
    <property type="term" value="P:L-histidine biosynthetic process"/>
    <property type="evidence" value="ECO:0007669"/>
    <property type="project" value="UniProtKB-KW"/>
</dbReference>
<dbReference type="GO" id="GO:0009086">
    <property type="term" value="P:methionine biosynthetic process"/>
    <property type="evidence" value="ECO:0007669"/>
    <property type="project" value="UniProtKB-KW"/>
</dbReference>
<dbReference type="GO" id="GO:0006164">
    <property type="term" value="P:purine nucleotide biosynthetic process"/>
    <property type="evidence" value="ECO:0007669"/>
    <property type="project" value="UniProtKB-KW"/>
</dbReference>
<dbReference type="GO" id="GO:0035999">
    <property type="term" value="P:tetrahydrofolate interconversion"/>
    <property type="evidence" value="ECO:0007669"/>
    <property type="project" value="UniProtKB-UniRule"/>
</dbReference>
<dbReference type="CDD" id="cd01080">
    <property type="entry name" value="NAD_bind_m-THF_DH_Cyclohyd"/>
    <property type="match status" value="1"/>
</dbReference>
<dbReference type="FunFam" id="3.40.50.10860:FF:000001">
    <property type="entry name" value="Bifunctional protein FolD"/>
    <property type="match status" value="1"/>
</dbReference>
<dbReference type="FunFam" id="3.40.50.720:FF:000006">
    <property type="entry name" value="Bifunctional protein FolD"/>
    <property type="match status" value="1"/>
</dbReference>
<dbReference type="Gene3D" id="3.40.50.10860">
    <property type="entry name" value="Leucine Dehydrogenase, chain A, domain 1"/>
    <property type="match status" value="1"/>
</dbReference>
<dbReference type="Gene3D" id="3.40.50.720">
    <property type="entry name" value="NAD(P)-binding Rossmann-like Domain"/>
    <property type="match status" value="1"/>
</dbReference>
<dbReference type="HAMAP" id="MF_01576">
    <property type="entry name" value="THF_DHG_CYH"/>
    <property type="match status" value="1"/>
</dbReference>
<dbReference type="InterPro" id="IPR046346">
    <property type="entry name" value="Aminoacid_DH-like_N_sf"/>
</dbReference>
<dbReference type="InterPro" id="IPR036291">
    <property type="entry name" value="NAD(P)-bd_dom_sf"/>
</dbReference>
<dbReference type="InterPro" id="IPR000672">
    <property type="entry name" value="THF_DH/CycHdrlase"/>
</dbReference>
<dbReference type="InterPro" id="IPR020630">
    <property type="entry name" value="THF_DH/CycHdrlase_cat_dom"/>
</dbReference>
<dbReference type="InterPro" id="IPR020867">
    <property type="entry name" value="THF_DH/CycHdrlase_CS"/>
</dbReference>
<dbReference type="InterPro" id="IPR020631">
    <property type="entry name" value="THF_DH/CycHdrlase_NAD-bd_dom"/>
</dbReference>
<dbReference type="NCBIfam" id="NF008058">
    <property type="entry name" value="PRK10792.1"/>
    <property type="match status" value="1"/>
</dbReference>
<dbReference type="NCBIfam" id="NF010783">
    <property type="entry name" value="PRK14186.1"/>
    <property type="match status" value="1"/>
</dbReference>
<dbReference type="PANTHER" id="PTHR48099:SF5">
    <property type="entry name" value="C-1-TETRAHYDROFOLATE SYNTHASE, CYTOPLASMIC"/>
    <property type="match status" value="1"/>
</dbReference>
<dbReference type="PANTHER" id="PTHR48099">
    <property type="entry name" value="C-1-TETRAHYDROFOLATE SYNTHASE, CYTOPLASMIC-RELATED"/>
    <property type="match status" value="1"/>
</dbReference>
<dbReference type="Pfam" id="PF00763">
    <property type="entry name" value="THF_DHG_CYH"/>
    <property type="match status" value="1"/>
</dbReference>
<dbReference type="Pfam" id="PF02882">
    <property type="entry name" value="THF_DHG_CYH_C"/>
    <property type="match status" value="1"/>
</dbReference>
<dbReference type="PRINTS" id="PR00085">
    <property type="entry name" value="THFDHDRGNASE"/>
</dbReference>
<dbReference type="SUPFAM" id="SSF53223">
    <property type="entry name" value="Aminoacid dehydrogenase-like, N-terminal domain"/>
    <property type="match status" value="1"/>
</dbReference>
<dbReference type="SUPFAM" id="SSF51735">
    <property type="entry name" value="NAD(P)-binding Rossmann-fold domains"/>
    <property type="match status" value="1"/>
</dbReference>
<dbReference type="PROSITE" id="PS00767">
    <property type="entry name" value="THF_DHG_CYH_2"/>
    <property type="match status" value="1"/>
</dbReference>
<comment type="function">
    <text evidence="1">Catalyzes the oxidation of 5,10-methylenetetrahydrofolate to 5,10-methenyltetrahydrofolate and then the hydrolysis of 5,10-methenyltetrahydrofolate to 10-formyltetrahydrofolate.</text>
</comment>
<comment type="catalytic activity">
    <reaction evidence="1">
        <text>(6R)-5,10-methylene-5,6,7,8-tetrahydrofolate + NADP(+) = (6R)-5,10-methenyltetrahydrofolate + NADPH</text>
        <dbReference type="Rhea" id="RHEA:22812"/>
        <dbReference type="ChEBI" id="CHEBI:15636"/>
        <dbReference type="ChEBI" id="CHEBI:57455"/>
        <dbReference type="ChEBI" id="CHEBI:57783"/>
        <dbReference type="ChEBI" id="CHEBI:58349"/>
        <dbReference type="EC" id="1.5.1.5"/>
    </reaction>
</comment>
<comment type="catalytic activity">
    <reaction evidence="1">
        <text>(6R)-5,10-methenyltetrahydrofolate + H2O = (6R)-10-formyltetrahydrofolate + H(+)</text>
        <dbReference type="Rhea" id="RHEA:23700"/>
        <dbReference type="ChEBI" id="CHEBI:15377"/>
        <dbReference type="ChEBI" id="CHEBI:15378"/>
        <dbReference type="ChEBI" id="CHEBI:57455"/>
        <dbReference type="ChEBI" id="CHEBI:195366"/>
        <dbReference type="EC" id="3.5.4.9"/>
    </reaction>
</comment>
<comment type="pathway">
    <text evidence="1">One-carbon metabolism; tetrahydrofolate interconversion.</text>
</comment>
<comment type="subunit">
    <text evidence="1">Homodimer.</text>
</comment>
<comment type="similarity">
    <text evidence="1">Belongs to the tetrahydrofolate dehydrogenase/cyclohydrolase family.</text>
</comment>
<feature type="chain" id="PRO_1000185595" description="Bifunctional protein FolD">
    <location>
        <begin position="1"/>
        <end position="286"/>
    </location>
</feature>
<feature type="binding site" evidence="1">
    <location>
        <begin position="165"/>
        <end position="167"/>
    </location>
    <ligand>
        <name>NADP(+)</name>
        <dbReference type="ChEBI" id="CHEBI:58349"/>
    </ligand>
</feature>
<feature type="binding site" evidence="1">
    <location>
        <position position="190"/>
    </location>
    <ligand>
        <name>NADP(+)</name>
        <dbReference type="ChEBI" id="CHEBI:58349"/>
    </ligand>
</feature>
<feature type="binding site" evidence="1">
    <location>
        <position position="231"/>
    </location>
    <ligand>
        <name>NADP(+)</name>
        <dbReference type="ChEBI" id="CHEBI:58349"/>
    </ligand>
</feature>
<sequence>MVAVIIKGNEVAEKKRAQLTEEVVKLKEQGIVPGLAVILVGEDPASRSYVKGKEKGCEQVGIYSELIEFPETITEERLLAEIDRLNGDDRINGILVQLPLPKHIEEKAIIERISPEKDVDGFHPISVGRMMTGQDTFLPCTPHGIVELVKETNLDISGKHVVVIGRSNIVGKPVGQLFLNENATVTYCHSKTQNMKELTKLADILIVAVGRPKMVTADYIKEGAVVIDVGVNRLETGKLCGDVDFDNVLDVAGYITPVPKGVGPMTITMLLHNTVESAKRAGVVCK</sequence>
<evidence type="ECO:0000255" key="1">
    <source>
        <dbReference type="HAMAP-Rule" id="MF_01576"/>
    </source>
</evidence>
<accession>B9IXH4</accession>
<gene>
    <name evidence="1" type="primary">folD</name>
    <name type="ordered locus">BCQ_3967</name>
</gene>
<proteinExistence type="inferred from homology"/>
<organism>
    <name type="scientific">Bacillus cereus (strain Q1)</name>
    <dbReference type="NCBI Taxonomy" id="361100"/>
    <lineage>
        <taxon>Bacteria</taxon>
        <taxon>Bacillati</taxon>
        <taxon>Bacillota</taxon>
        <taxon>Bacilli</taxon>
        <taxon>Bacillales</taxon>
        <taxon>Bacillaceae</taxon>
        <taxon>Bacillus</taxon>
        <taxon>Bacillus cereus group</taxon>
    </lineage>
</organism>
<keyword id="KW-0028">Amino-acid biosynthesis</keyword>
<keyword id="KW-0368">Histidine biosynthesis</keyword>
<keyword id="KW-0378">Hydrolase</keyword>
<keyword id="KW-0486">Methionine biosynthesis</keyword>
<keyword id="KW-0511">Multifunctional enzyme</keyword>
<keyword id="KW-0521">NADP</keyword>
<keyword id="KW-0554">One-carbon metabolism</keyword>
<keyword id="KW-0560">Oxidoreductase</keyword>
<keyword id="KW-0658">Purine biosynthesis</keyword>
<name>FOLD_BACCQ</name>
<reference key="1">
    <citation type="journal article" date="2009" name="J. Bacteriol.">
        <title>Complete genome sequence of the extremophilic Bacillus cereus strain Q1 with industrial applications.</title>
        <authorList>
            <person name="Xiong Z."/>
            <person name="Jiang Y."/>
            <person name="Qi D."/>
            <person name="Lu H."/>
            <person name="Yang F."/>
            <person name="Yang J."/>
            <person name="Chen L."/>
            <person name="Sun L."/>
            <person name="Xu X."/>
            <person name="Xue Y."/>
            <person name="Zhu Y."/>
            <person name="Jin Q."/>
        </authorList>
    </citation>
    <scope>NUCLEOTIDE SEQUENCE [LARGE SCALE GENOMIC DNA]</scope>
    <source>
        <strain>Q1</strain>
    </source>
</reference>